<evidence type="ECO:0000255" key="1"/>
<evidence type="ECO:0000305" key="2"/>
<sequence length="56" mass="6323">MSRRRGIMSSKLKEELAKELGFYDTVQAEGWGAIRAKDAGNMVKRAVELAQQQLKQ</sequence>
<protein>
    <recommendedName>
        <fullName>Protein SspF</fullName>
    </recommendedName>
</protein>
<organism>
    <name type="scientific">Priestia megaterium (strain ATCC 12872 / QMB1551)</name>
    <name type="common">Bacillus megaterium</name>
    <dbReference type="NCBI Taxonomy" id="545693"/>
    <lineage>
        <taxon>Bacteria</taxon>
        <taxon>Bacillati</taxon>
        <taxon>Bacillota</taxon>
        <taxon>Bacilli</taxon>
        <taxon>Bacillales</taxon>
        <taxon>Bacillaceae</taxon>
        <taxon>Priestia</taxon>
    </lineage>
</organism>
<keyword id="KW-0238">DNA-binding</keyword>
<keyword id="KW-1185">Reference proteome</keyword>
<keyword id="KW-0749">Sporulation</keyword>
<reference key="1">
    <citation type="journal article" date="1994" name="Gene">
        <title>Cloning and sequencing of the sspF (originally 0.3 kb) genes from Bacillus cereus and Bacillus megaterium.</title>
        <authorList>
            <person name="Loshon C.A."/>
            <person name="Beary K.E."/>
            <person name="Chander M."/>
            <person name="Setlow P."/>
        </authorList>
    </citation>
    <scope>NUCLEOTIDE SEQUENCE [GENOMIC DNA]</scope>
</reference>
<reference key="2">
    <citation type="journal article" date="2011" name="J. Bacteriol.">
        <title>Genome sequences of the biotechnologically important Bacillus megaterium strains QM B1551 and DSM319.</title>
        <authorList>
            <person name="Eppinger M."/>
            <person name="Bunk B."/>
            <person name="Johns M.A."/>
            <person name="Edirisinghe J.N."/>
            <person name="Kutumbaka K.K."/>
            <person name="Koenig S.S."/>
            <person name="Creasy H.H."/>
            <person name="Rosovitz M.J."/>
            <person name="Riley D.R."/>
            <person name="Daugherty S."/>
            <person name="Martin M."/>
            <person name="Elbourne L.D."/>
            <person name="Paulsen I."/>
            <person name="Biedendieck R."/>
            <person name="Braun C."/>
            <person name="Grayburn S."/>
            <person name="Dhingra S."/>
            <person name="Lukyanchuk V."/>
            <person name="Ball B."/>
            <person name="Ul-Qamar R."/>
            <person name="Seibel J."/>
            <person name="Bremer E."/>
            <person name="Jahn D."/>
            <person name="Ravel J."/>
            <person name="Vary P.S."/>
        </authorList>
    </citation>
    <scope>NUCLEOTIDE SEQUENCE [LARGE SCALE GENOMIC DNA]</scope>
    <source>
        <strain>ATCC 12872 / DSM 1804 / QMB1551</strain>
    </source>
</reference>
<gene>
    <name type="primary">sspF</name>
    <name type="ordered locus">BMQ_0064</name>
</gene>
<accession>P52971</accession>
<accession>D5DVL7</accession>
<name>SSPF_PRIM1</name>
<proteinExistence type="inferred from homology"/>
<feature type="chain" id="PRO_0000196317" description="Protein SspF">
    <location>
        <begin position="1"/>
        <end position="56"/>
    </location>
</feature>
<feature type="site" description="Cleavage; by spore protease" evidence="1">
    <location>
        <begin position="15"/>
        <end position="16"/>
    </location>
</feature>
<dbReference type="EMBL" id="L31644">
    <property type="protein sequence ID" value="AAA65542.1"/>
    <property type="molecule type" value="Genomic_DNA"/>
</dbReference>
<dbReference type="EMBL" id="CP001983">
    <property type="protein sequence ID" value="ADE67182.1"/>
    <property type="molecule type" value="Genomic_DNA"/>
</dbReference>
<dbReference type="PIR" id="I40011">
    <property type="entry name" value="I40011"/>
</dbReference>
<dbReference type="RefSeq" id="WP_013054860.1">
    <property type="nucleotide sequence ID" value="NC_014019.1"/>
</dbReference>
<dbReference type="SMR" id="P52971"/>
<dbReference type="STRING" id="545693.BMQ_0064"/>
<dbReference type="KEGG" id="bmq:BMQ_0064"/>
<dbReference type="eggNOG" id="ENOG5032Y0E">
    <property type="taxonomic scope" value="Bacteria"/>
</dbReference>
<dbReference type="HOGENOM" id="CLU_169738_3_0_9"/>
<dbReference type="Proteomes" id="UP000000935">
    <property type="component" value="Chromosome"/>
</dbReference>
<dbReference type="GO" id="GO:0003690">
    <property type="term" value="F:double-stranded DNA binding"/>
    <property type="evidence" value="ECO:0007669"/>
    <property type="project" value="InterPro"/>
</dbReference>
<dbReference type="GO" id="GO:0006265">
    <property type="term" value="P:DNA topological change"/>
    <property type="evidence" value="ECO:0007669"/>
    <property type="project" value="InterPro"/>
</dbReference>
<dbReference type="GO" id="GO:0030435">
    <property type="term" value="P:sporulation resulting in formation of a cellular spore"/>
    <property type="evidence" value="ECO:0007669"/>
    <property type="project" value="UniProtKB-KW"/>
</dbReference>
<dbReference type="Gene3D" id="6.10.10.80">
    <property type="entry name" value="Small, acid-soluble spore protein, alpha/beta type-like"/>
    <property type="match status" value="1"/>
</dbReference>
<dbReference type="InterPro" id="IPR001448">
    <property type="entry name" value="SASP_alpha/beta-type"/>
</dbReference>
<dbReference type="InterPro" id="IPR018126">
    <property type="entry name" value="SASP_alpha/beta-type_CS"/>
</dbReference>
<dbReference type="InterPro" id="IPR038300">
    <property type="entry name" value="SASP_sf_alpha/beta"/>
</dbReference>
<dbReference type="Pfam" id="PF00269">
    <property type="entry name" value="SASP"/>
    <property type="match status" value="1"/>
</dbReference>
<dbReference type="PROSITE" id="PS00304">
    <property type="entry name" value="SASP_1"/>
    <property type="match status" value="1"/>
</dbReference>
<comment type="function">
    <text>May play some important role in either sporulation or the dormant spore.</text>
</comment>
<comment type="similarity">
    <text evidence="2">Belongs to the alpha/beta-type SASP family.</text>
</comment>